<dbReference type="EC" id="3.1.1.8"/>
<dbReference type="EMBL" id="M62780">
    <property type="protein sequence ID" value="AAA31509.1"/>
    <property type="molecule type" value="Genomic_DNA"/>
</dbReference>
<dbReference type="PIR" id="B39768">
    <property type="entry name" value="B39768"/>
</dbReference>
<dbReference type="SMR" id="P32753"/>
<dbReference type="STRING" id="9940.ENSOARP00000001621"/>
<dbReference type="ESTHER" id="sheep-BCHE">
    <property type="family name" value="BCHE"/>
</dbReference>
<dbReference type="MEROPS" id="S09.980"/>
<dbReference type="GlyCosmos" id="P32753">
    <property type="glycosylation" value="1 site, No reported glycans"/>
</dbReference>
<dbReference type="PaxDb" id="9940-ENSOARP00000001621"/>
<dbReference type="eggNOG" id="KOG4389">
    <property type="taxonomic scope" value="Eukaryota"/>
</dbReference>
<dbReference type="Proteomes" id="UP000002356">
    <property type="component" value="Unplaced"/>
</dbReference>
<dbReference type="GO" id="GO:0005615">
    <property type="term" value="C:extracellular space"/>
    <property type="evidence" value="ECO:0007669"/>
    <property type="project" value="TreeGrafter"/>
</dbReference>
<dbReference type="GO" id="GO:0005886">
    <property type="term" value="C:plasma membrane"/>
    <property type="evidence" value="ECO:0007669"/>
    <property type="project" value="TreeGrafter"/>
</dbReference>
<dbReference type="GO" id="GO:0003990">
    <property type="term" value="F:acetylcholinesterase activity"/>
    <property type="evidence" value="ECO:0000250"/>
    <property type="project" value="UniProtKB"/>
</dbReference>
<dbReference type="GO" id="GO:0004104">
    <property type="term" value="F:cholinesterase activity"/>
    <property type="evidence" value="ECO:0000250"/>
    <property type="project" value="UniProtKB"/>
</dbReference>
<dbReference type="GO" id="GO:0006581">
    <property type="term" value="P:acetylcholine catabolic process"/>
    <property type="evidence" value="ECO:0007669"/>
    <property type="project" value="TreeGrafter"/>
</dbReference>
<dbReference type="GO" id="GO:0019695">
    <property type="term" value="P:choline metabolic process"/>
    <property type="evidence" value="ECO:0007669"/>
    <property type="project" value="TreeGrafter"/>
</dbReference>
<dbReference type="FunFam" id="3.40.50.1820:FF:000598">
    <property type="entry name" value="Cholinesterase"/>
    <property type="match status" value="1"/>
</dbReference>
<dbReference type="Gene3D" id="3.40.50.1820">
    <property type="entry name" value="alpha/beta hydrolase"/>
    <property type="match status" value="1"/>
</dbReference>
<dbReference type="InterPro" id="IPR029058">
    <property type="entry name" value="AB_hydrolase_fold"/>
</dbReference>
<dbReference type="InterPro" id="IPR050654">
    <property type="entry name" value="AChE-related_enzymes"/>
</dbReference>
<dbReference type="InterPro" id="IPR002018">
    <property type="entry name" value="CarbesteraseB"/>
</dbReference>
<dbReference type="InterPro" id="IPR019826">
    <property type="entry name" value="Carboxylesterase_B_AS"/>
</dbReference>
<dbReference type="InterPro" id="IPR019819">
    <property type="entry name" value="Carboxylesterase_B_CS"/>
</dbReference>
<dbReference type="InterPro" id="IPR000997">
    <property type="entry name" value="Cholinesterase"/>
</dbReference>
<dbReference type="PANTHER" id="PTHR43918">
    <property type="entry name" value="ACETYLCHOLINESTERASE"/>
    <property type="match status" value="1"/>
</dbReference>
<dbReference type="PANTHER" id="PTHR43918:SF5">
    <property type="entry name" value="CHOLINESTERASE"/>
    <property type="match status" value="1"/>
</dbReference>
<dbReference type="Pfam" id="PF00135">
    <property type="entry name" value="COesterase"/>
    <property type="match status" value="1"/>
</dbReference>
<dbReference type="PRINTS" id="PR00878">
    <property type="entry name" value="CHOLNESTRASE"/>
</dbReference>
<dbReference type="SUPFAM" id="SSF53474">
    <property type="entry name" value="alpha/beta-Hydrolases"/>
    <property type="match status" value="1"/>
</dbReference>
<dbReference type="PROSITE" id="PS00122">
    <property type="entry name" value="CARBOXYLESTERASE_B_1"/>
    <property type="match status" value="1"/>
</dbReference>
<dbReference type="PROSITE" id="PS00941">
    <property type="entry name" value="CARBOXYLESTERASE_B_2"/>
    <property type="match status" value="1"/>
</dbReference>
<protein>
    <recommendedName>
        <fullName>Cholinesterase</fullName>
        <ecNumber>3.1.1.8</ecNumber>
    </recommendedName>
    <alternativeName>
        <fullName>Acylcholine acylhydrolase</fullName>
    </alternativeName>
    <alternativeName>
        <fullName>Butyrylcholine esterase</fullName>
    </alternativeName>
    <alternativeName>
        <fullName>Choline esterase II</fullName>
    </alternativeName>
    <alternativeName>
        <fullName>Pseudocholinesterase</fullName>
    </alternativeName>
</protein>
<sequence length="141" mass="15234">NTDQSFPGFLGSEMWNPNTDLSEDCLYLNVWIPTPKPKNATVMIWIYGGSFQTGTSSLHVYDGKFLARVERVIVVSMNYRVGALGFLALPGNPEAPGNVGLFDQQLALQWVQKNIAAFGGNPKSVTLFGESAGAASVSLHL</sequence>
<accession>P32753</accession>
<keyword id="KW-1015">Disulfide bond</keyword>
<keyword id="KW-0325">Glycoprotein</keyword>
<keyword id="KW-0378">Hydrolase</keyword>
<keyword id="KW-0597">Phosphoprotein</keyword>
<keyword id="KW-1185">Reference proteome</keyword>
<keyword id="KW-0964">Secreted</keyword>
<keyword id="KW-0719">Serine esterase</keyword>
<comment type="function">
    <text evidence="1">Esterase with broad substrate specificity. Contributes to the inactivation of the neurotransmitter acetylcholine. Can degrade neurotoxic organophosphate esters (By similarity).</text>
</comment>
<comment type="catalytic activity">
    <reaction>
        <text>an acylcholine + H2O = a carboxylate + choline + H(+)</text>
        <dbReference type="Rhea" id="RHEA:21964"/>
        <dbReference type="ChEBI" id="CHEBI:15354"/>
        <dbReference type="ChEBI" id="CHEBI:15377"/>
        <dbReference type="ChEBI" id="CHEBI:15378"/>
        <dbReference type="ChEBI" id="CHEBI:29067"/>
        <dbReference type="ChEBI" id="CHEBI:35287"/>
        <dbReference type="EC" id="3.1.1.8"/>
    </reaction>
</comment>
<comment type="subunit">
    <text evidence="1">Homotetramer; disulfide-linked. Dimer of dimers (By similarity).</text>
</comment>
<comment type="subcellular location">
    <subcellularLocation>
        <location evidence="1">Secreted</location>
    </subcellularLocation>
</comment>
<comment type="tissue specificity">
    <text>Present in most cells except erythrocytes.</text>
</comment>
<comment type="similarity">
    <text evidence="5">Belongs to the type-B carboxylesterase/lipase family.</text>
</comment>
<evidence type="ECO:0000250" key="1"/>
<evidence type="ECO:0000250" key="2">
    <source>
        <dbReference type="UniProtKB" id="P06276"/>
    </source>
</evidence>
<evidence type="ECO:0000255" key="3"/>
<evidence type="ECO:0000255" key="4">
    <source>
        <dbReference type="PROSITE-ProRule" id="PRU10039"/>
    </source>
</evidence>
<evidence type="ECO:0000305" key="5"/>
<name>CHLE_SHEEP</name>
<gene>
    <name type="primary">BCHE</name>
</gene>
<reference key="1">
    <citation type="journal article" date="1991" name="J. Biol. Chem.">
        <title>Use of the polymerase chain reaction for homology probing of butyrylcholinesterase from several vertebrates.</title>
        <authorList>
            <person name="Arpagaus M."/>
            <person name="Chatonnet A."/>
            <person name="Masson P."/>
            <person name="Newton M."/>
            <person name="Vaughan T.A."/>
            <person name="Bartels C.F."/>
            <person name="Nogueira C.P."/>
            <person name="la Du B.N."/>
            <person name="Lockridge O."/>
        </authorList>
    </citation>
    <scope>NUCLEOTIDE SEQUENCE [GENOMIC DNA]</scope>
    <source>
        <tissue>Liver</tissue>
    </source>
</reference>
<feature type="chain" id="PRO_0000070288" description="Cholinesterase">
    <location>
        <begin position="1" status="less than"/>
        <end position="141" status="greater than"/>
    </location>
</feature>
<feature type="active site" description="Acyl-ester intermediate" evidence="4">
    <location>
        <position position="131"/>
    </location>
</feature>
<feature type="binding site" evidence="1">
    <location>
        <begin position="49"/>
        <end position="50"/>
    </location>
    <ligand>
        <name>substrate</name>
    </ligand>
</feature>
<feature type="modified residue" description="Phosphoserine" evidence="2">
    <location>
        <position position="131"/>
    </location>
</feature>
<feature type="glycosylation site" description="N-linked (GlcNAc...) asparagine" evidence="3">
    <location>
        <position position="39"/>
    </location>
</feature>
<feature type="non-terminal residue">
    <location>
        <position position="1"/>
    </location>
</feature>
<feature type="non-terminal residue">
    <location>
        <position position="141"/>
    </location>
</feature>
<organism>
    <name type="scientific">Ovis aries</name>
    <name type="common">Sheep</name>
    <dbReference type="NCBI Taxonomy" id="9940"/>
    <lineage>
        <taxon>Eukaryota</taxon>
        <taxon>Metazoa</taxon>
        <taxon>Chordata</taxon>
        <taxon>Craniata</taxon>
        <taxon>Vertebrata</taxon>
        <taxon>Euteleostomi</taxon>
        <taxon>Mammalia</taxon>
        <taxon>Eutheria</taxon>
        <taxon>Laurasiatheria</taxon>
        <taxon>Artiodactyla</taxon>
        <taxon>Ruminantia</taxon>
        <taxon>Pecora</taxon>
        <taxon>Bovidae</taxon>
        <taxon>Caprinae</taxon>
        <taxon>Ovis</taxon>
    </lineage>
</organism>
<proteinExistence type="evidence at transcript level"/>